<comment type="function">
    <text evidence="1">Aspartyl-tRNA synthetase with relaxed tRNA specificity since it is able to aspartylate not only its cognate tRNA(Asp) but also tRNA(Asn). Reaction proceeds in two steps: L-aspartate is first activated by ATP to form Asp-AMP and then transferred to the acceptor end of tRNA(Asp/Asn).</text>
</comment>
<comment type="catalytic activity">
    <reaction evidence="1">
        <text>tRNA(Asx) + L-aspartate + ATP = L-aspartyl-tRNA(Asx) + AMP + diphosphate</text>
        <dbReference type="Rhea" id="RHEA:18349"/>
        <dbReference type="Rhea" id="RHEA-COMP:9710"/>
        <dbReference type="Rhea" id="RHEA-COMP:9711"/>
        <dbReference type="ChEBI" id="CHEBI:29991"/>
        <dbReference type="ChEBI" id="CHEBI:30616"/>
        <dbReference type="ChEBI" id="CHEBI:33019"/>
        <dbReference type="ChEBI" id="CHEBI:78442"/>
        <dbReference type="ChEBI" id="CHEBI:78516"/>
        <dbReference type="ChEBI" id="CHEBI:456215"/>
        <dbReference type="EC" id="6.1.1.23"/>
    </reaction>
</comment>
<comment type="subunit">
    <text evidence="1">Homodimer.</text>
</comment>
<comment type="subcellular location">
    <subcellularLocation>
        <location evidence="1">Cytoplasm</location>
    </subcellularLocation>
</comment>
<comment type="similarity">
    <text evidence="1">Belongs to the class-II aminoacyl-tRNA synthetase family. Type 1 subfamily.</text>
</comment>
<dbReference type="EC" id="6.1.1.23" evidence="1"/>
<dbReference type="EMBL" id="CP001217">
    <property type="protein sequence ID" value="ACJ07779.1"/>
    <property type="molecule type" value="Genomic_DNA"/>
</dbReference>
<dbReference type="SMR" id="B6JLK1"/>
<dbReference type="KEGG" id="hpp:HPP12_0626"/>
<dbReference type="HOGENOM" id="CLU_014330_3_2_7"/>
<dbReference type="Proteomes" id="UP000008198">
    <property type="component" value="Chromosome"/>
</dbReference>
<dbReference type="GO" id="GO:0005737">
    <property type="term" value="C:cytoplasm"/>
    <property type="evidence" value="ECO:0007669"/>
    <property type="project" value="UniProtKB-SubCell"/>
</dbReference>
<dbReference type="GO" id="GO:0004815">
    <property type="term" value="F:aspartate-tRNA ligase activity"/>
    <property type="evidence" value="ECO:0007669"/>
    <property type="project" value="UniProtKB-UniRule"/>
</dbReference>
<dbReference type="GO" id="GO:0050560">
    <property type="term" value="F:aspartate-tRNA(Asn) ligase activity"/>
    <property type="evidence" value="ECO:0007669"/>
    <property type="project" value="UniProtKB-EC"/>
</dbReference>
<dbReference type="GO" id="GO:0005524">
    <property type="term" value="F:ATP binding"/>
    <property type="evidence" value="ECO:0007669"/>
    <property type="project" value="UniProtKB-UniRule"/>
</dbReference>
<dbReference type="GO" id="GO:0003676">
    <property type="term" value="F:nucleic acid binding"/>
    <property type="evidence" value="ECO:0007669"/>
    <property type="project" value="InterPro"/>
</dbReference>
<dbReference type="GO" id="GO:0006422">
    <property type="term" value="P:aspartyl-tRNA aminoacylation"/>
    <property type="evidence" value="ECO:0007669"/>
    <property type="project" value="UniProtKB-UniRule"/>
</dbReference>
<dbReference type="CDD" id="cd00777">
    <property type="entry name" value="AspRS_core"/>
    <property type="match status" value="1"/>
</dbReference>
<dbReference type="CDD" id="cd04317">
    <property type="entry name" value="EcAspRS_like_N"/>
    <property type="match status" value="1"/>
</dbReference>
<dbReference type="Gene3D" id="3.30.930.10">
    <property type="entry name" value="Bira Bifunctional Protein, Domain 2"/>
    <property type="match status" value="1"/>
</dbReference>
<dbReference type="Gene3D" id="3.30.1360.30">
    <property type="entry name" value="GAD-like domain"/>
    <property type="match status" value="1"/>
</dbReference>
<dbReference type="Gene3D" id="2.40.50.140">
    <property type="entry name" value="Nucleic acid-binding proteins"/>
    <property type="match status" value="1"/>
</dbReference>
<dbReference type="HAMAP" id="MF_00044">
    <property type="entry name" value="Asp_tRNA_synth_type1"/>
    <property type="match status" value="1"/>
</dbReference>
<dbReference type="InterPro" id="IPR004364">
    <property type="entry name" value="Aa-tRNA-synt_II"/>
</dbReference>
<dbReference type="InterPro" id="IPR006195">
    <property type="entry name" value="aa-tRNA-synth_II"/>
</dbReference>
<dbReference type="InterPro" id="IPR045864">
    <property type="entry name" value="aa-tRNA-synth_II/BPL/LPL"/>
</dbReference>
<dbReference type="InterPro" id="IPR004524">
    <property type="entry name" value="Asp-tRNA-ligase_1"/>
</dbReference>
<dbReference type="InterPro" id="IPR047089">
    <property type="entry name" value="Asp-tRNA-ligase_1_N"/>
</dbReference>
<dbReference type="InterPro" id="IPR002312">
    <property type="entry name" value="Asp/Asn-tRNA-synth_IIb"/>
</dbReference>
<dbReference type="InterPro" id="IPR047090">
    <property type="entry name" value="AspRS_core"/>
</dbReference>
<dbReference type="InterPro" id="IPR004115">
    <property type="entry name" value="GAD-like_sf"/>
</dbReference>
<dbReference type="InterPro" id="IPR029351">
    <property type="entry name" value="GAD_dom"/>
</dbReference>
<dbReference type="InterPro" id="IPR012340">
    <property type="entry name" value="NA-bd_OB-fold"/>
</dbReference>
<dbReference type="InterPro" id="IPR004365">
    <property type="entry name" value="NA-bd_OB_tRNA"/>
</dbReference>
<dbReference type="NCBIfam" id="TIGR00459">
    <property type="entry name" value="aspS_bact"/>
    <property type="match status" value="1"/>
</dbReference>
<dbReference type="NCBIfam" id="NF001750">
    <property type="entry name" value="PRK00476.1"/>
    <property type="match status" value="1"/>
</dbReference>
<dbReference type="PANTHER" id="PTHR22594:SF5">
    <property type="entry name" value="ASPARTATE--TRNA LIGASE, MITOCHONDRIAL"/>
    <property type="match status" value="1"/>
</dbReference>
<dbReference type="PANTHER" id="PTHR22594">
    <property type="entry name" value="ASPARTYL/LYSYL-TRNA SYNTHETASE"/>
    <property type="match status" value="1"/>
</dbReference>
<dbReference type="Pfam" id="PF02938">
    <property type="entry name" value="GAD"/>
    <property type="match status" value="1"/>
</dbReference>
<dbReference type="Pfam" id="PF00152">
    <property type="entry name" value="tRNA-synt_2"/>
    <property type="match status" value="1"/>
</dbReference>
<dbReference type="Pfam" id="PF01336">
    <property type="entry name" value="tRNA_anti-codon"/>
    <property type="match status" value="1"/>
</dbReference>
<dbReference type="PRINTS" id="PR01042">
    <property type="entry name" value="TRNASYNTHASP"/>
</dbReference>
<dbReference type="SUPFAM" id="SSF55681">
    <property type="entry name" value="Class II aaRS and biotin synthetases"/>
    <property type="match status" value="1"/>
</dbReference>
<dbReference type="SUPFAM" id="SSF55261">
    <property type="entry name" value="GAD domain-like"/>
    <property type="match status" value="1"/>
</dbReference>
<dbReference type="SUPFAM" id="SSF50249">
    <property type="entry name" value="Nucleic acid-binding proteins"/>
    <property type="match status" value="1"/>
</dbReference>
<dbReference type="PROSITE" id="PS50862">
    <property type="entry name" value="AA_TRNA_LIGASE_II"/>
    <property type="match status" value="1"/>
</dbReference>
<sequence>MRSHFCTEISEKDVGKTIKVAGWCNTYRDHGGVVFIDLRDKSGLVQLVCDPSSKAYEKALEVRSEFVLVAKGRVRLRGAGLENPKLKTGKIEIVLEELVIENKSATPPIEIGNKSVNEDLRLKYRYLDLRSLNAYEIFKLRSEVALITRNTLAQKGFLEIETPILSKTTPEGARDYLVPSRVHEGEFFALPQSPQLFKQLLMVGGMDRYFQIARCFRDEDLRADRQPEFTQIDAEMSFCDENDVMGVVEDLLQEIFKAIGHTISKPFKRMPYKEAMENYGSDKPDLRFELPLIEVGDCFIDSSNAIFSNIAKDPKNQRIKALNVKGADALFSRSVLKELEEFVRQFGAKGLAYLQIKEDGIKGPLVKFLSEKGLKNILEKTGAKIGDIVFFGAGDKKIVLDYMGRLRLKVAETLDLIDKDALNFLWVVNFPMFEKTENGYHAAHHPFTMPKNIECEDIEEVEAHAYDVVLNGVELGGGSIRIHKEEMQKKVFEKINIHEEEAQKKFGFLLEALKFGAPPHGGFAIGFDRLIMLMTKSNSIRDVIAFPKTQKASCLLTNAPSPINEEQLRELHIRLRK</sequence>
<protein>
    <recommendedName>
        <fullName evidence="1">Aspartate--tRNA(Asp/Asn) ligase</fullName>
        <ecNumber evidence="1">6.1.1.23</ecNumber>
    </recommendedName>
    <alternativeName>
        <fullName evidence="1">Aspartyl-tRNA synthetase</fullName>
        <shortName evidence="1">AspRS</shortName>
    </alternativeName>
    <alternativeName>
        <fullName evidence="1">Non-discriminating aspartyl-tRNA synthetase</fullName>
        <shortName evidence="1">ND-AspRS</shortName>
    </alternativeName>
</protein>
<gene>
    <name evidence="1" type="primary">aspS</name>
    <name type="ordered locus">HPP12_0626</name>
</gene>
<reference key="1">
    <citation type="submission" date="2008-10" db="EMBL/GenBank/DDBJ databases">
        <title>The complete genome sequence of Helicobacter pylori strain P12.</title>
        <authorList>
            <person name="Fischer W."/>
            <person name="Windhager L."/>
            <person name="Karnholz A."/>
            <person name="Zeiller M."/>
            <person name="Zimmer R."/>
            <person name="Haas R."/>
        </authorList>
    </citation>
    <scope>NUCLEOTIDE SEQUENCE [LARGE SCALE GENOMIC DNA]</scope>
    <source>
        <strain>P12</strain>
    </source>
</reference>
<name>SYDND_HELP2</name>
<evidence type="ECO:0000255" key="1">
    <source>
        <dbReference type="HAMAP-Rule" id="MF_00044"/>
    </source>
</evidence>
<keyword id="KW-0030">Aminoacyl-tRNA synthetase</keyword>
<keyword id="KW-0067">ATP-binding</keyword>
<keyword id="KW-0963">Cytoplasm</keyword>
<keyword id="KW-0436">Ligase</keyword>
<keyword id="KW-0547">Nucleotide-binding</keyword>
<keyword id="KW-0648">Protein biosynthesis</keyword>
<feature type="chain" id="PRO_1000090998" description="Aspartate--tRNA(Asp/Asn) ligase">
    <location>
        <begin position="1"/>
        <end position="577"/>
    </location>
</feature>
<feature type="region of interest" description="Aspartate" evidence="1">
    <location>
        <begin position="195"/>
        <end position="198"/>
    </location>
</feature>
<feature type="binding site" evidence="1">
    <location>
        <position position="171"/>
    </location>
    <ligand>
        <name>L-aspartate</name>
        <dbReference type="ChEBI" id="CHEBI:29991"/>
    </ligand>
</feature>
<feature type="binding site" evidence="1">
    <location>
        <begin position="217"/>
        <end position="219"/>
    </location>
    <ligand>
        <name>ATP</name>
        <dbReference type="ChEBI" id="CHEBI:30616"/>
    </ligand>
</feature>
<feature type="binding site" evidence="1">
    <location>
        <position position="217"/>
    </location>
    <ligand>
        <name>L-aspartate</name>
        <dbReference type="ChEBI" id="CHEBI:29991"/>
    </ligand>
</feature>
<feature type="binding site" evidence="1">
    <location>
        <position position="226"/>
    </location>
    <ligand>
        <name>ATP</name>
        <dbReference type="ChEBI" id="CHEBI:30616"/>
    </ligand>
</feature>
<feature type="binding site" evidence="1">
    <location>
        <position position="444"/>
    </location>
    <ligand>
        <name>L-aspartate</name>
        <dbReference type="ChEBI" id="CHEBI:29991"/>
    </ligand>
</feature>
<feature type="binding site" evidence="1">
    <location>
        <position position="474"/>
    </location>
    <ligand>
        <name>ATP</name>
        <dbReference type="ChEBI" id="CHEBI:30616"/>
    </ligand>
</feature>
<feature type="binding site" evidence="1">
    <location>
        <position position="481"/>
    </location>
    <ligand>
        <name>L-aspartate</name>
        <dbReference type="ChEBI" id="CHEBI:29991"/>
    </ligand>
</feature>
<feature type="binding site" evidence="1">
    <location>
        <begin position="526"/>
        <end position="529"/>
    </location>
    <ligand>
        <name>ATP</name>
        <dbReference type="ChEBI" id="CHEBI:30616"/>
    </ligand>
</feature>
<feature type="site" description="Important for tRNA non-discrimination" evidence="1">
    <location>
        <position position="30"/>
    </location>
</feature>
<feature type="site" description="Important for tRNA non-discrimination" evidence="1">
    <location>
        <position position="80"/>
    </location>
</feature>
<proteinExistence type="inferred from homology"/>
<accession>B6JLK1</accession>
<organism>
    <name type="scientific">Helicobacter pylori (strain P12)</name>
    <dbReference type="NCBI Taxonomy" id="570508"/>
    <lineage>
        <taxon>Bacteria</taxon>
        <taxon>Pseudomonadati</taxon>
        <taxon>Campylobacterota</taxon>
        <taxon>Epsilonproteobacteria</taxon>
        <taxon>Campylobacterales</taxon>
        <taxon>Helicobacteraceae</taxon>
        <taxon>Helicobacter</taxon>
    </lineage>
</organism>